<sequence>MPKLGMQSIRRRQLIDATLEAINEVGMHDATIAQIARRAGVSTGIISHYFRDKNGLLEATMRDITSQLRDAVLNRLHALPQGSAEQRLQAIVGGNFDETQVSSAAMKAWLAFWASSMHQPMLYRLQQVSSRRLLSNLVSEFRRELPRQQAQEAGYGLAALIDGLWLRAALSGKPLDKPLAHSLTRHFITQHLPTD</sequence>
<dbReference type="EMBL" id="CP000802">
    <property type="protein sequence ID" value="ABV04760.1"/>
    <property type="molecule type" value="Genomic_DNA"/>
</dbReference>
<dbReference type="RefSeq" id="WP_001295527.1">
    <property type="nucleotide sequence ID" value="NC_009800.1"/>
</dbReference>
<dbReference type="SMR" id="A7ZWV6"/>
<dbReference type="GeneID" id="75206485"/>
<dbReference type="KEGG" id="ecx:EcHS_A0372"/>
<dbReference type="HOGENOM" id="CLU_069356_15_4_6"/>
<dbReference type="UniPathway" id="UPA00529"/>
<dbReference type="GO" id="GO:0003700">
    <property type="term" value="F:DNA-binding transcription factor activity"/>
    <property type="evidence" value="ECO:0007669"/>
    <property type="project" value="UniProtKB-UniRule"/>
</dbReference>
<dbReference type="GO" id="GO:0000976">
    <property type="term" value="F:transcription cis-regulatory region binding"/>
    <property type="evidence" value="ECO:0007669"/>
    <property type="project" value="TreeGrafter"/>
</dbReference>
<dbReference type="GO" id="GO:0019285">
    <property type="term" value="P:glycine betaine biosynthetic process from choline"/>
    <property type="evidence" value="ECO:0007669"/>
    <property type="project" value="UniProtKB-UniRule"/>
</dbReference>
<dbReference type="GO" id="GO:0045892">
    <property type="term" value="P:negative regulation of DNA-templated transcription"/>
    <property type="evidence" value="ECO:0007669"/>
    <property type="project" value="UniProtKB-UniRule"/>
</dbReference>
<dbReference type="FunFam" id="1.10.357.10:FF:000009">
    <property type="entry name" value="HTH-type transcriptional regulator BetI"/>
    <property type="match status" value="1"/>
</dbReference>
<dbReference type="Gene3D" id="1.10.357.10">
    <property type="entry name" value="Tetracycline Repressor, domain 2"/>
    <property type="match status" value="1"/>
</dbReference>
<dbReference type="HAMAP" id="MF_00768">
    <property type="entry name" value="HTH_type_BetI"/>
    <property type="match status" value="1"/>
</dbReference>
<dbReference type="InterPro" id="IPR039538">
    <property type="entry name" value="BetI_C"/>
</dbReference>
<dbReference type="InterPro" id="IPR023772">
    <property type="entry name" value="DNA-bd_HTH_TetR-type_CS"/>
</dbReference>
<dbReference type="InterPro" id="IPR009057">
    <property type="entry name" value="Homeodomain-like_sf"/>
</dbReference>
<dbReference type="InterPro" id="IPR050109">
    <property type="entry name" value="HTH-type_TetR-like_transc_reg"/>
</dbReference>
<dbReference type="InterPro" id="IPR001647">
    <property type="entry name" value="HTH_TetR"/>
</dbReference>
<dbReference type="InterPro" id="IPR036271">
    <property type="entry name" value="Tet_transcr_reg_TetR-rel_C_sf"/>
</dbReference>
<dbReference type="InterPro" id="IPR017757">
    <property type="entry name" value="Tscrpt_rep_BetI"/>
</dbReference>
<dbReference type="NCBIfam" id="TIGR03384">
    <property type="entry name" value="betaine_BetI"/>
    <property type="match status" value="1"/>
</dbReference>
<dbReference type="NCBIfam" id="NF001978">
    <property type="entry name" value="PRK00767.1"/>
    <property type="match status" value="1"/>
</dbReference>
<dbReference type="PANTHER" id="PTHR30055:SF234">
    <property type="entry name" value="HTH-TYPE TRANSCRIPTIONAL REGULATOR BETI"/>
    <property type="match status" value="1"/>
</dbReference>
<dbReference type="PANTHER" id="PTHR30055">
    <property type="entry name" value="HTH-TYPE TRANSCRIPTIONAL REGULATOR RUTR"/>
    <property type="match status" value="1"/>
</dbReference>
<dbReference type="Pfam" id="PF13977">
    <property type="entry name" value="TetR_C_6"/>
    <property type="match status" value="1"/>
</dbReference>
<dbReference type="Pfam" id="PF00440">
    <property type="entry name" value="TetR_N"/>
    <property type="match status" value="1"/>
</dbReference>
<dbReference type="PRINTS" id="PR00455">
    <property type="entry name" value="HTHTETR"/>
</dbReference>
<dbReference type="SUPFAM" id="SSF46689">
    <property type="entry name" value="Homeodomain-like"/>
    <property type="match status" value="1"/>
</dbReference>
<dbReference type="SUPFAM" id="SSF48498">
    <property type="entry name" value="Tetracyclin repressor-like, C-terminal domain"/>
    <property type="match status" value="1"/>
</dbReference>
<dbReference type="PROSITE" id="PS01081">
    <property type="entry name" value="HTH_TETR_1"/>
    <property type="match status" value="1"/>
</dbReference>
<dbReference type="PROSITE" id="PS50977">
    <property type="entry name" value="HTH_TETR_2"/>
    <property type="match status" value="1"/>
</dbReference>
<organism>
    <name type="scientific">Escherichia coli O9:H4 (strain HS)</name>
    <dbReference type="NCBI Taxonomy" id="331112"/>
    <lineage>
        <taxon>Bacteria</taxon>
        <taxon>Pseudomonadati</taxon>
        <taxon>Pseudomonadota</taxon>
        <taxon>Gammaproteobacteria</taxon>
        <taxon>Enterobacterales</taxon>
        <taxon>Enterobacteriaceae</taxon>
        <taxon>Escherichia</taxon>
    </lineage>
</organism>
<comment type="function">
    <text evidence="1">Repressor involved in the biosynthesis of the osmoprotectant glycine betaine. It represses transcription of the choline transporter BetT and the genes of BetAB involved in the synthesis of glycine betaine (By similarity).</text>
</comment>
<comment type="pathway">
    <text>Amine and polyamine biosynthesis; betaine biosynthesis via choline pathway [regulation].</text>
</comment>
<protein>
    <recommendedName>
        <fullName evidence="2">HTH-type transcriptional regulator BetI</fullName>
    </recommendedName>
</protein>
<accession>A7ZWV6</accession>
<evidence type="ECO:0000250" key="1"/>
<evidence type="ECO:0000255" key="2">
    <source>
        <dbReference type="HAMAP-Rule" id="MF_00768"/>
    </source>
</evidence>
<feature type="chain" id="PRO_1000083561" description="HTH-type transcriptional regulator BetI">
    <location>
        <begin position="1"/>
        <end position="195"/>
    </location>
</feature>
<feature type="domain" description="HTH tetR-type" evidence="2">
    <location>
        <begin position="8"/>
        <end position="68"/>
    </location>
</feature>
<feature type="DNA-binding region" description="H-T-H motif" evidence="2">
    <location>
        <begin position="31"/>
        <end position="50"/>
    </location>
</feature>
<name>BETI_ECOHS</name>
<keyword id="KW-0238">DNA-binding</keyword>
<keyword id="KW-0678">Repressor</keyword>
<keyword id="KW-0804">Transcription</keyword>
<keyword id="KW-0805">Transcription regulation</keyword>
<reference key="1">
    <citation type="journal article" date="2008" name="J. Bacteriol.">
        <title>The pangenome structure of Escherichia coli: comparative genomic analysis of E. coli commensal and pathogenic isolates.</title>
        <authorList>
            <person name="Rasko D.A."/>
            <person name="Rosovitz M.J."/>
            <person name="Myers G.S.A."/>
            <person name="Mongodin E.F."/>
            <person name="Fricke W.F."/>
            <person name="Gajer P."/>
            <person name="Crabtree J."/>
            <person name="Sebaihia M."/>
            <person name="Thomson N.R."/>
            <person name="Chaudhuri R."/>
            <person name="Henderson I.R."/>
            <person name="Sperandio V."/>
            <person name="Ravel J."/>
        </authorList>
    </citation>
    <scope>NUCLEOTIDE SEQUENCE [LARGE SCALE GENOMIC DNA]</scope>
    <source>
        <strain>HS</strain>
    </source>
</reference>
<gene>
    <name evidence="2" type="primary">betI</name>
    <name type="ordered locus">EcHS_A0372</name>
</gene>
<proteinExistence type="inferred from homology"/>